<dbReference type="EC" id="3.6.1.-" evidence="1"/>
<dbReference type="EMBL" id="CP000724">
    <property type="protein sequence ID" value="ABR48928.1"/>
    <property type="molecule type" value="Genomic_DNA"/>
</dbReference>
<dbReference type="RefSeq" id="WP_012063899.1">
    <property type="nucleotide sequence ID" value="NC_009633.1"/>
</dbReference>
<dbReference type="SMR" id="A6TRW0"/>
<dbReference type="STRING" id="293826.Amet_2778"/>
<dbReference type="KEGG" id="amt:Amet_2778"/>
<dbReference type="eggNOG" id="COG1162">
    <property type="taxonomic scope" value="Bacteria"/>
</dbReference>
<dbReference type="HOGENOM" id="CLU_033617_2_1_9"/>
<dbReference type="OrthoDB" id="9809485at2"/>
<dbReference type="Proteomes" id="UP000001572">
    <property type="component" value="Chromosome"/>
</dbReference>
<dbReference type="GO" id="GO:0005737">
    <property type="term" value="C:cytoplasm"/>
    <property type="evidence" value="ECO:0007669"/>
    <property type="project" value="UniProtKB-SubCell"/>
</dbReference>
<dbReference type="GO" id="GO:0005525">
    <property type="term" value="F:GTP binding"/>
    <property type="evidence" value="ECO:0007669"/>
    <property type="project" value="UniProtKB-UniRule"/>
</dbReference>
<dbReference type="GO" id="GO:0003924">
    <property type="term" value="F:GTPase activity"/>
    <property type="evidence" value="ECO:0007669"/>
    <property type="project" value="UniProtKB-UniRule"/>
</dbReference>
<dbReference type="GO" id="GO:0046872">
    <property type="term" value="F:metal ion binding"/>
    <property type="evidence" value="ECO:0007669"/>
    <property type="project" value="UniProtKB-KW"/>
</dbReference>
<dbReference type="GO" id="GO:0019843">
    <property type="term" value="F:rRNA binding"/>
    <property type="evidence" value="ECO:0007669"/>
    <property type="project" value="UniProtKB-KW"/>
</dbReference>
<dbReference type="GO" id="GO:0042274">
    <property type="term" value="P:ribosomal small subunit biogenesis"/>
    <property type="evidence" value="ECO:0007669"/>
    <property type="project" value="UniProtKB-UniRule"/>
</dbReference>
<dbReference type="CDD" id="cd04466">
    <property type="entry name" value="S1_YloQ_GTPase"/>
    <property type="match status" value="1"/>
</dbReference>
<dbReference type="CDD" id="cd01854">
    <property type="entry name" value="YjeQ_EngC"/>
    <property type="match status" value="1"/>
</dbReference>
<dbReference type="Gene3D" id="2.40.50.140">
    <property type="entry name" value="Nucleic acid-binding proteins"/>
    <property type="match status" value="1"/>
</dbReference>
<dbReference type="Gene3D" id="3.40.50.300">
    <property type="entry name" value="P-loop containing nucleotide triphosphate hydrolases"/>
    <property type="match status" value="1"/>
</dbReference>
<dbReference type="Gene3D" id="1.10.40.50">
    <property type="entry name" value="Probable gtpase engc, domain 3"/>
    <property type="match status" value="1"/>
</dbReference>
<dbReference type="HAMAP" id="MF_01820">
    <property type="entry name" value="GTPase_RsgA"/>
    <property type="match status" value="1"/>
</dbReference>
<dbReference type="InterPro" id="IPR030378">
    <property type="entry name" value="G_CP_dom"/>
</dbReference>
<dbReference type="InterPro" id="IPR012340">
    <property type="entry name" value="NA-bd_OB-fold"/>
</dbReference>
<dbReference type="InterPro" id="IPR027417">
    <property type="entry name" value="P-loop_NTPase"/>
</dbReference>
<dbReference type="InterPro" id="IPR004881">
    <property type="entry name" value="Ribosome_biogen_GTPase_RsgA"/>
</dbReference>
<dbReference type="InterPro" id="IPR010914">
    <property type="entry name" value="RsgA_GTPase_dom"/>
</dbReference>
<dbReference type="InterPro" id="IPR031944">
    <property type="entry name" value="RsgA_N"/>
</dbReference>
<dbReference type="NCBIfam" id="TIGR00157">
    <property type="entry name" value="ribosome small subunit-dependent GTPase A"/>
    <property type="match status" value="1"/>
</dbReference>
<dbReference type="PANTHER" id="PTHR32120">
    <property type="entry name" value="SMALL RIBOSOMAL SUBUNIT BIOGENESIS GTPASE RSGA"/>
    <property type="match status" value="1"/>
</dbReference>
<dbReference type="PANTHER" id="PTHR32120:SF11">
    <property type="entry name" value="SMALL RIBOSOMAL SUBUNIT BIOGENESIS GTPASE RSGA 1, MITOCHONDRIAL-RELATED"/>
    <property type="match status" value="1"/>
</dbReference>
<dbReference type="Pfam" id="PF03193">
    <property type="entry name" value="RsgA_GTPase"/>
    <property type="match status" value="1"/>
</dbReference>
<dbReference type="Pfam" id="PF16745">
    <property type="entry name" value="RsgA_N"/>
    <property type="match status" value="1"/>
</dbReference>
<dbReference type="SUPFAM" id="SSF50249">
    <property type="entry name" value="Nucleic acid-binding proteins"/>
    <property type="match status" value="1"/>
</dbReference>
<dbReference type="SUPFAM" id="SSF52540">
    <property type="entry name" value="P-loop containing nucleoside triphosphate hydrolases"/>
    <property type="match status" value="1"/>
</dbReference>
<dbReference type="PROSITE" id="PS50936">
    <property type="entry name" value="ENGC_GTPASE"/>
    <property type="match status" value="1"/>
</dbReference>
<dbReference type="PROSITE" id="PS51721">
    <property type="entry name" value="G_CP"/>
    <property type="match status" value="1"/>
</dbReference>
<comment type="function">
    <text evidence="1">One of several proteins that assist in the late maturation steps of the functional core of the 30S ribosomal subunit. Helps release RbfA from mature subunits. May play a role in the assembly of ribosomal proteins into the subunit. Circularly permuted GTPase that catalyzes slow GTP hydrolysis, GTPase activity is stimulated by the 30S ribosomal subunit.</text>
</comment>
<comment type="cofactor">
    <cofactor evidence="1">
        <name>Zn(2+)</name>
        <dbReference type="ChEBI" id="CHEBI:29105"/>
    </cofactor>
    <text evidence="1">Binds 1 zinc ion per subunit.</text>
</comment>
<comment type="subunit">
    <text evidence="1">Monomer. Associates with 30S ribosomal subunit, binds 16S rRNA.</text>
</comment>
<comment type="subcellular location">
    <subcellularLocation>
        <location evidence="1">Cytoplasm</location>
    </subcellularLocation>
</comment>
<comment type="similarity">
    <text evidence="1">Belongs to the TRAFAC class YlqF/YawG GTPase family. RsgA subfamily.</text>
</comment>
<protein>
    <recommendedName>
        <fullName evidence="1">Small ribosomal subunit biogenesis GTPase RsgA</fullName>
        <ecNumber evidence="1">3.6.1.-</ecNumber>
    </recommendedName>
</protein>
<name>RSGA_ALKMQ</name>
<proteinExistence type="inferred from homology"/>
<reference key="1">
    <citation type="journal article" date="2016" name="Genome Announc.">
        <title>Complete genome sequence of Alkaliphilus metalliredigens strain QYMF, an alkaliphilic and metal-reducing bacterium isolated from borax-contaminated leachate ponds.</title>
        <authorList>
            <person name="Hwang C."/>
            <person name="Copeland A."/>
            <person name="Lucas S."/>
            <person name="Lapidus A."/>
            <person name="Barry K."/>
            <person name="Detter J.C."/>
            <person name="Glavina Del Rio T."/>
            <person name="Hammon N."/>
            <person name="Israni S."/>
            <person name="Dalin E."/>
            <person name="Tice H."/>
            <person name="Pitluck S."/>
            <person name="Chertkov O."/>
            <person name="Brettin T."/>
            <person name="Bruce D."/>
            <person name="Han C."/>
            <person name="Schmutz J."/>
            <person name="Larimer F."/>
            <person name="Land M.L."/>
            <person name="Hauser L."/>
            <person name="Kyrpides N."/>
            <person name="Mikhailova N."/>
            <person name="Ye Q."/>
            <person name="Zhou J."/>
            <person name="Richardson P."/>
            <person name="Fields M.W."/>
        </authorList>
    </citation>
    <scope>NUCLEOTIDE SEQUENCE [LARGE SCALE GENOMIC DNA]</scope>
    <source>
        <strain>QYMF</strain>
    </source>
</reference>
<keyword id="KW-0963">Cytoplasm</keyword>
<keyword id="KW-0342">GTP-binding</keyword>
<keyword id="KW-0378">Hydrolase</keyword>
<keyword id="KW-0479">Metal-binding</keyword>
<keyword id="KW-0547">Nucleotide-binding</keyword>
<keyword id="KW-1185">Reference proteome</keyword>
<keyword id="KW-0690">Ribosome biogenesis</keyword>
<keyword id="KW-0694">RNA-binding</keyword>
<keyword id="KW-0699">rRNA-binding</keyword>
<keyword id="KW-0862">Zinc</keyword>
<organism>
    <name type="scientific">Alkaliphilus metalliredigens (strain QYMF)</name>
    <dbReference type="NCBI Taxonomy" id="293826"/>
    <lineage>
        <taxon>Bacteria</taxon>
        <taxon>Bacillati</taxon>
        <taxon>Bacillota</taxon>
        <taxon>Clostridia</taxon>
        <taxon>Peptostreptococcales</taxon>
        <taxon>Natronincolaceae</taxon>
        <taxon>Alkaliphilus</taxon>
    </lineage>
</organism>
<accession>A6TRW0</accession>
<evidence type="ECO:0000255" key="1">
    <source>
        <dbReference type="HAMAP-Rule" id="MF_01820"/>
    </source>
</evidence>
<evidence type="ECO:0000255" key="2">
    <source>
        <dbReference type="PROSITE-ProRule" id="PRU01058"/>
    </source>
</evidence>
<sequence length="292" mass="32829">MSKGKLIKGIAGFYYVEVNKEVYECKGRGILRKKKLTPLVGDYVEITVTDEDNKKGMIDDIFPRKTELIRPTVANVDQVIVVFSVTQPDPHLSLLDHFLILAETQNIDVVICLNKLDLVQREDVAELVGIYEKVGYPVILTSQNDSIGLEQLEKVLRGKTTVFAGPSGVGKSTLLNRILPHVTLQTGELSSKIARGKHTTRHVELISLETEGWVVDTPGFSSLNIDFLKEEELADYFIDFEPFAKDCRFLSCVHLNEPICGVKTALKAGQLVQSRYNSYLQMIGEIKKNRRY</sequence>
<feature type="chain" id="PRO_1000188026" description="Small ribosomal subunit biogenesis GTPase RsgA">
    <location>
        <begin position="1"/>
        <end position="292"/>
    </location>
</feature>
<feature type="domain" description="CP-type G" evidence="2">
    <location>
        <begin position="65"/>
        <end position="223"/>
    </location>
</feature>
<feature type="binding site" evidence="1">
    <location>
        <begin position="114"/>
        <end position="117"/>
    </location>
    <ligand>
        <name>GTP</name>
        <dbReference type="ChEBI" id="CHEBI:37565"/>
    </ligand>
</feature>
<feature type="binding site" evidence="1">
    <location>
        <begin position="165"/>
        <end position="173"/>
    </location>
    <ligand>
        <name>GTP</name>
        <dbReference type="ChEBI" id="CHEBI:37565"/>
    </ligand>
</feature>
<feature type="binding site" evidence="1">
    <location>
        <position position="247"/>
    </location>
    <ligand>
        <name>Zn(2+)</name>
        <dbReference type="ChEBI" id="CHEBI:29105"/>
    </ligand>
</feature>
<feature type="binding site" evidence="1">
    <location>
        <position position="252"/>
    </location>
    <ligand>
        <name>Zn(2+)</name>
        <dbReference type="ChEBI" id="CHEBI:29105"/>
    </ligand>
</feature>
<feature type="binding site" evidence="1">
    <location>
        <position position="254"/>
    </location>
    <ligand>
        <name>Zn(2+)</name>
        <dbReference type="ChEBI" id="CHEBI:29105"/>
    </ligand>
</feature>
<feature type="binding site" evidence="1">
    <location>
        <position position="260"/>
    </location>
    <ligand>
        <name>Zn(2+)</name>
        <dbReference type="ChEBI" id="CHEBI:29105"/>
    </ligand>
</feature>
<gene>
    <name evidence="1" type="primary">rsgA</name>
    <name type="ordered locus">Amet_2778</name>
</gene>